<organism>
    <name type="scientific">Chromohalobacter salexigens (strain ATCC BAA-138 / DSM 3043 / CIP 106854 / NCIMB 13768 / 1H11)</name>
    <dbReference type="NCBI Taxonomy" id="290398"/>
    <lineage>
        <taxon>Bacteria</taxon>
        <taxon>Pseudomonadati</taxon>
        <taxon>Pseudomonadota</taxon>
        <taxon>Gammaproteobacteria</taxon>
        <taxon>Oceanospirillales</taxon>
        <taxon>Halomonadaceae</taxon>
        <taxon>Chromohalobacter</taxon>
    </lineage>
</organism>
<feature type="chain" id="PRO_0000265147" description="RNA-binding protein Hfq">
    <location>
        <begin position="1"/>
        <end position="83"/>
    </location>
</feature>
<feature type="domain" description="Sm" evidence="2">
    <location>
        <begin position="9"/>
        <end position="68"/>
    </location>
</feature>
<dbReference type="EMBL" id="CP000285">
    <property type="protein sequence ID" value="ABE58632.1"/>
    <property type="molecule type" value="Genomic_DNA"/>
</dbReference>
<dbReference type="RefSeq" id="WP_011506578.1">
    <property type="nucleotide sequence ID" value="NC_007963.1"/>
</dbReference>
<dbReference type="SMR" id="Q1QY26"/>
<dbReference type="STRING" id="290398.Csal_1277"/>
<dbReference type="GeneID" id="95334017"/>
<dbReference type="KEGG" id="csa:Csal_1277"/>
<dbReference type="eggNOG" id="COG1923">
    <property type="taxonomic scope" value="Bacteria"/>
</dbReference>
<dbReference type="HOGENOM" id="CLU_113688_2_2_6"/>
<dbReference type="OrthoDB" id="9799751at2"/>
<dbReference type="Proteomes" id="UP000000239">
    <property type="component" value="Chromosome"/>
</dbReference>
<dbReference type="GO" id="GO:0005829">
    <property type="term" value="C:cytosol"/>
    <property type="evidence" value="ECO:0007669"/>
    <property type="project" value="TreeGrafter"/>
</dbReference>
<dbReference type="GO" id="GO:0003723">
    <property type="term" value="F:RNA binding"/>
    <property type="evidence" value="ECO:0007669"/>
    <property type="project" value="UniProtKB-UniRule"/>
</dbReference>
<dbReference type="GO" id="GO:0006355">
    <property type="term" value="P:regulation of DNA-templated transcription"/>
    <property type="evidence" value="ECO:0007669"/>
    <property type="project" value="InterPro"/>
</dbReference>
<dbReference type="GO" id="GO:0043487">
    <property type="term" value="P:regulation of RNA stability"/>
    <property type="evidence" value="ECO:0007669"/>
    <property type="project" value="TreeGrafter"/>
</dbReference>
<dbReference type="GO" id="GO:0045974">
    <property type="term" value="P:regulation of translation, ncRNA-mediated"/>
    <property type="evidence" value="ECO:0007669"/>
    <property type="project" value="TreeGrafter"/>
</dbReference>
<dbReference type="CDD" id="cd01716">
    <property type="entry name" value="Hfq"/>
    <property type="match status" value="1"/>
</dbReference>
<dbReference type="FunFam" id="2.30.30.100:FF:000001">
    <property type="entry name" value="RNA-binding protein Hfq"/>
    <property type="match status" value="1"/>
</dbReference>
<dbReference type="Gene3D" id="2.30.30.100">
    <property type="match status" value="1"/>
</dbReference>
<dbReference type="HAMAP" id="MF_00436">
    <property type="entry name" value="Hfq"/>
    <property type="match status" value="1"/>
</dbReference>
<dbReference type="InterPro" id="IPR005001">
    <property type="entry name" value="Hfq"/>
</dbReference>
<dbReference type="InterPro" id="IPR010920">
    <property type="entry name" value="LSM_dom_sf"/>
</dbReference>
<dbReference type="InterPro" id="IPR047575">
    <property type="entry name" value="Sm"/>
</dbReference>
<dbReference type="NCBIfam" id="TIGR02383">
    <property type="entry name" value="Hfq"/>
    <property type="match status" value="1"/>
</dbReference>
<dbReference type="NCBIfam" id="NF001602">
    <property type="entry name" value="PRK00395.1"/>
    <property type="match status" value="1"/>
</dbReference>
<dbReference type="PANTHER" id="PTHR34772">
    <property type="entry name" value="RNA-BINDING PROTEIN HFQ"/>
    <property type="match status" value="1"/>
</dbReference>
<dbReference type="PANTHER" id="PTHR34772:SF1">
    <property type="entry name" value="RNA-BINDING PROTEIN HFQ"/>
    <property type="match status" value="1"/>
</dbReference>
<dbReference type="Pfam" id="PF17209">
    <property type="entry name" value="Hfq"/>
    <property type="match status" value="1"/>
</dbReference>
<dbReference type="SUPFAM" id="SSF50182">
    <property type="entry name" value="Sm-like ribonucleoproteins"/>
    <property type="match status" value="1"/>
</dbReference>
<dbReference type="PROSITE" id="PS52002">
    <property type="entry name" value="SM"/>
    <property type="match status" value="1"/>
</dbReference>
<sequence length="83" mass="9379">MSKGQSLQDPYLNILRKERIPVSIFLVNGIKLQGQIESFDQFVILLRNTVSQMVYKHAISTVVPSRNVRLPVQDPNAPAEEDS</sequence>
<gene>
    <name evidence="1" type="primary">hfq</name>
    <name type="ordered locus">Csal_1277</name>
</gene>
<comment type="function">
    <text evidence="1">RNA chaperone that binds small regulatory RNA (sRNAs) and mRNAs to facilitate mRNA translational regulation in response to envelope stress, environmental stress and changes in metabolite concentrations. Also binds with high specificity to tRNAs.</text>
</comment>
<comment type="subunit">
    <text evidence="1">Homohexamer.</text>
</comment>
<comment type="similarity">
    <text evidence="1">Belongs to the Hfq family.</text>
</comment>
<name>HFQ_CHRSD</name>
<reference key="1">
    <citation type="journal article" date="2011" name="Stand. Genomic Sci.">
        <title>Complete genome sequence of the halophilic and highly halotolerant Chromohalobacter salexigens type strain (1H11(T)).</title>
        <authorList>
            <person name="Copeland A."/>
            <person name="O'Connor K."/>
            <person name="Lucas S."/>
            <person name="Lapidus A."/>
            <person name="Berry K.W."/>
            <person name="Detter J.C."/>
            <person name="Del Rio T.G."/>
            <person name="Hammon N."/>
            <person name="Dalin E."/>
            <person name="Tice H."/>
            <person name="Pitluck S."/>
            <person name="Bruce D."/>
            <person name="Goodwin L."/>
            <person name="Han C."/>
            <person name="Tapia R."/>
            <person name="Saunders E."/>
            <person name="Schmutz J."/>
            <person name="Brettin T."/>
            <person name="Larimer F."/>
            <person name="Land M."/>
            <person name="Hauser L."/>
            <person name="Vargas C."/>
            <person name="Nieto J.J."/>
            <person name="Kyrpides N.C."/>
            <person name="Ivanova N."/>
            <person name="Goker M."/>
            <person name="Klenk H.P."/>
            <person name="Csonka L.N."/>
            <person name="Woyke T."/>
        </authorList>
    </citation>
    <scope>NUCLEOTIDE SEQUENCE [LARGE SCALE GENOMIC DNA]</scope>
    <source>
        <strain>ATCC BAA-138 / DSM 3043 / CIP 106854 / NCIMB 13768 / 1H11</strain>
    </source>
</reference>
<accession>Q1QY26</accession>
<keyword id="KW-1185">Reference proteome</keyword>
<keyword id="KW-0694">RNA-binding</keyword>
<keyword id="KW-0346">Stress response</keyword>
<protein>
    <recommendedName>
        <fullName evidence="1">RNA-binding protein Hfq</fullName>
    </recommendedName>
</protein>
<proteinExistence type="inferred from homology"/>
<evidence type="ECO:0000255" key="1">
    <source>
        <dbReference type="HAMAP-Rule" id="MF_00436"/>
    </source>
</evidence>
<evidence type="ECO:0000255" key="2">
    <source>
        <dbReference type="PROSITE-ProRule" id="PRU01346"/>
    </source>
</evidence>